<organism>
    <name type="scientific">Paracidovorax citrulli (strain AAC00-1)</name>
    <name type="common">Acidovorax citrulli</name>
    <dbReference type="NCBI Taxonomy" id="397945"/>
    <lineage>
        <taxon>Bacteria</taxon>
        <taxon>Pseudomonadati</taxon>
        <taxon>Pseudomonadota</taxon>
        <taxon>Betaproteobacteria</taxon>
        <taxon>Burkholderiales</taxon>
        <taxon>Comamonadaceae</taxon>
        <taxon>Paracidovorax</taxon>
    </lineage>
</organism>
<protein>
    <recommendedName>
        <fullName evidence="1">NAD kinase</fullName>
        <ecNumber evidence="1">2.7.1.23</ecNumber>
    </recommendedName>
    <alternativeName>
        <fullName evidence="1">ATP-dependent NAD kinase</fullName>
    </alternativeName>
</protein>
<proteinExistence type="inferred from homology"/>
<keyword id="KW-0067">ATP-binding</keyword>
<keyword id="KW-0963">Cytoplasm</keyword>
<keyword id="KW-0418">Kinase</keyword>
<keyword id="KW-0520">NAD</keyword>
<keyword id="KW-0521">NADP</keyword>
<keyword id="KW-0547">Nucleotide-binding</keyword>
<keyword id="KW-0808">Transferase</keyword>
<evidence type="ECO:0000255" key="1">
    <source>
        <dbReference type="HAMAP-Rule" id="MF_00361"/>
    </source>
</evidence>
<gene>
    <name evidence="1" type="primary">nadK</name>
    <name type="ordered locus">Aave_3601</name>
</gene>
<sequence length="298" mass="32443">MKLRFQRVALVGKYQAPTSAGMSDSSRDALDGIARFLANEGCEVALEADTAANTGFTDYPALSVERIGLDCDLCLVVGGDGTMLGVGRQLAQYRTPLIGINQGRLGFITDIPLGEYPTVLKPMLRGEYEEDLRPLMRARVMRQGQCVFEALAMNDVVVNRGSTSGMVELRVEVGGHFVSNQRADGLIIASPTGSTAYALSAGGPMLHPTIPGWVLAPIAPHTLSNRPIVLSDSMEVAVEVVSGRDVSANFDMQSLASLQHGDRILVQRSDYRARFLHPRGWNYFATLRKKLRWNEGGY</sequence>
<comment type="function">
    <text evidence="1">Involved in the regulation of the intracellular balance of NAD and NADP, and is a key enzyme in the biosynthesis of NADP. Catalyzes specifically the phosphorylation on 2'-hydroxyl of the adenosine moiety of NAD to yield NADP.</text>
</comment>
<comment type="catalytic activity">
    <reaction evidence="1">
        <text>NAD(+) + ATP = ADP + NADP(+) + H(+)</text>
        <dbReference type="Rhea" id="RHEA:18629"/>
        <dbReference type="ChEBI" id="CHEBI:15378"/>
        <dbReference type="ChEBI" id="CHEBI:30616"/>
        <dbReference type="ChEBI" id="CHEBI:57540"/>
        <dbReference type="ChEBI" id="CHEBI:58349"/>
        <dbReference type="ChEBI" id="CHEBI:456216"/>
        <dbReference type="EC" id="2.7.1.23"/>
    </reaction>
</comment>
<comment type="cofactor">
    <cofactor evidence="1">
        <name>a divalent metal cation</name>
        <dbReference type="ChEBI" id="CHEBI:60240"/>
    </cofactor>
</comment>
<comment type="subcellular location">
    <subcellularLocation>
        <location evidence="1">Cytoplasm</location>
    </subcellularLocation>
</comment>
<comment type="similarity">
    <text evidence="1">Belongs to the NAD kinase family.</text>
</comment>
<dbReference type="EC" id="2.7.1.23" evidence="1"/>
<dbReference type="EMBL" id="CP000512">
    <property type="protein sequence ID" value="ABM34152.1"/>
    <property type="molecule type" value="Genomic_DNA"/>
</dbReference>
<dbReference type="RefSeq" id="WP_011796649.1">
    <property type="nucleotide sequence ID" value="NC_008752.1"/>
</dbReference>
<dbReference type="SMR" id="A1TT64"/>
<dbReference type="STRING" id="397945.Aave_3601"/>
<dbReference type="KEGG" id="aav:Aave_3601"/>
<dbReference type="eggNOG" id="COG0061">
    <property type="taxonomic scope" value="Bacteria"/>
</dbReference>
<dbReference type="HOGENOM" id="CLU_008831_0_1_4"/>
<dbReference type="OrthoDB" id="9774737at2"/>
<dbReference type="Proteomes" id="UP000002596">
    <property type="component" value="Chromosome"/>
</dbReference>
<dbReference type="GO" id="GO:0005737">
    <property type="term" value="C:cytoplasm"/>
    <property type="evidence" value="ECO:0007669"/>
    <property type="project" value="UniProtKB-SubCell"/>
</dbReference>
<dbReference type="GO" id="GO:0005524">
    <property type="term" value="F:ATP binding"/>
    <property type="evidence" value="ECO:0007669"/>
    <property type="project" value="UniProtKB-KW"/>
</dbReference>
<dbReference type="GO" id="GO:0046872">
    <property type="term" value="F:metal ion binding"/>
    <property type="evidence" value="ECO:0007669"/>
    <property type="project" value="UniProtKB-UniRule"/>
</dbReference>
<dbReference type="GO" id="GO:0051287">
    <property type="term" value="F:NAD binding"/>
    <property type="evidence" value="ECO:0007669"/>
    <property type="project" value="UniProtKB-ARBA"/>
</dbReference>
<dbReference type="GO" id="GO:0003951">
    <property type="term" value="F:NAD+ kinase activity"/>
    <property type="evidence" value="ECO:0007669"/>
    <property type="project" value="UniProtKB-UniRule"/>
</dbReference>
<dbReference type="GO" id="GO:0019674">
    <property type="term" value="P:NAD metabolic process"/>
    <property type="evidence" value="ECO:0007669"/>
    <property type="project" value="InterPro"/>
</dbReference>
<dbReference type="GO" id="GO:0006741">
    <property type="term" value="P:NADP biosynthetic process"/>
    <property type="evidence" value="ECO:0007669"/>
    <property type="project" value="UniProtKB-UniRule"/>
</dbReference>
<dbReference type="Gene3D" id="3.40.50.10330">
    <property type="entry name" value="Probable inorganic polyphosphate/atp-NAD kinase, domain 1"/>
    <property type="match status" value="1"/>
</dbReference>
<dbReference type="Gene3D" id="2.60.200.30">
    <property type="entry name" value="Probable inorganic polyphosphate/atp-NAD kinase, domain 2"/>
    <property type="match status" value="1"/>
</dbReference>
<dbReference type="HAMAP" id="MF_00361">
    <property type="entry name" value="NAD_kinase"/>
    <property type="match status" value="1"/>
</dbReference>
<dbReference type="InterPro" id="IPR017438">
    <property type="entry name" value="ATP-NAD_kinase_N"/>
</dbReference>
<dbReference type="InterPro" id="IPR017437">
    <property type="entry name" value="ATP-NAD_kinase_PpnK-typ_C"/>
</dbReference>
<dbReference type="InterPro" id="IPR016064">
    <property type="entry name" value="NAD/diacylglycerol_kinase_sf"/>
</dbReference>
<dbReference type="InterPro" id="IPR002504">
    <property type="entry name" value="NADK"/>
</dbReference>
<dbReference type="NCBIfam" id="NF002561">
    <property type="entry name" value="PRK02155.1"/>
    <property type="match status" value="1"/>
</dbReference>
<dbReference type="PANTHER" id="PTHR20275">
    <property type="entry name" value="NAD KINASE"/>
    <property type="match status" value="1"/>
</dbReference>
<dbReference type="PANTHER" id="PTHR20275:SF0">
    <property type="entry name" value="NAD KINASE"/>
    <property type="match status" value="1"/>
</dbReference>
<dbReference type="Pfam" id="PF01513">
    <property type="entry name" value="NAD_kinase"/>
    <property type="match status" value="1"/>
</dbReference>
<dbReference type="Pfam" id="PF20143">
    <property type="entry name" value="NAD_kinase_C"/>
    <property type="match status" value="1"/>
</dbReference>
<dbReference type="SUPFAM" id="SSF111331">
    <property type="entry name" value="NAD kinase/diacylglycerol kinase-like"/>
    <property type="match status" value="1"/>
</dbReference>
<name>NADK_PARC0</name>
<reference key="1">
    <citation type="submission" date="2006-12" db="EMBL/GenBank/DDBJ databases">
        <title>Complete sequence of Acidovorax avenae subsp. citrulli AAC00-1.</title>
        <authorList>
            <person name="Copeland A."/>
            <person name="Lucas S."/>
            <person name="Lapidus A."/>
            <person name="Barry K."/>
            <person name="Detter J.C."/>
            <person name="Glavina del Rio T."/>
            <person name="Dalin E."/>
            <person name="Tice H."/>
            <person name="Pitluck S."/>
            <person name="Kiss H."/>
            <person name="Brettin T."/>
            <person name="Bruce D."/>
            <person name="Han C."/>
            <person name="Tapia R."/>
            <person name="Gilna P."/>
            <person name="Schmutz J."/>
            <person name="Larimer F."/>
            <person name="Land M."/>
            <person name="Hauser L."/>
            <person name="Kyrpides N."/>
            <person name="Kim E."/>
            <person name="Stahl D."/>
            <person name="Richardson P."/>
        </authorList>
    </citation>
    <scope>NUCLEOTIDE SEQUENCE [LARGE SCALE GENOMIC DNA]</scope>
    <source>
        <strain>AAC00-1</strain>
    </source>
</reference>
<accession>A1TT64</accession>
<feature type="chain" id="PRO_1000005388" description="NAD kinase">
    <location>
        <begin position="1"/>
        <end position="298"/>
    </location>
</feature>
<feature type="active site" description="Proton acceptor" evidence="1">
    <location>
        <position position="80"/>
    </location>
</feature>
<feature type="binding site" evidence="1">
    <location>
        <begin position="80"/>
        <end position="81"/>
    </location>
    <ligand>
        <name>NAD(+)</name>
        <dbReference type="ChEBI" id="CHEBI:57540"/>
    </ligand>
</feature>
<feature type="binding site" evidence="1">
    <location>
        <begin position="154"/>
        <end position="155"/>
    </location>
    <ligand>
        <name>NAD(+)</name>
        <dbReference type="ChEBI" id="CHEBI:57540"/>
    </ligand>
</feature>
<feature type="binding site" evidence="1">
    <location>
        <position position="182"/>
    </location>
    <ligand>
        <name>NAD(+)</name>
        <dbReference type="ChEBI" id="CHEBI:57540"/>
    </ligand>
</feature>
<feature type="binding site" evidence="1">
    <location>
        <position position="184"/>
    </location>
    <ligand>
        <name>NAD(+)</name>
        <dbReference type="ChEBI" id="CHEBI:57540"/>
    </ligand>
</feature>
<feature type="binding site" evidence="1">
    <location>
        <begin position="195"/>
        <end position="200"/>
    </location>
    <ligand>
        <name>NAD(+)</name>
        <dbReference type="ChEBI" id="CHEBI:57540"/>
    </ligand>
</feature>
<feature type="binding site" evidence="1">
    <location>
        <position position="219"/>
    </location>
    <ligand>
        <name>NAD(+)</name>
        <dbReference type="ChEBI" id="CHEBI:57540"/>
    </ligand>
</feature>
<feature type="binding site" evidence="1">
    <location>
        <position position="253"/>
    </location>
    <ligand>
        <name>NAD(+)</name>
        <dbReference type="ChEBI" id="CHEBI:57540"/>
    </ligand>
</feature>